<dbReference type="EMBL" id="CP000941">
    <property type="protein sequence ID" value="ACA11524.1"/>
    <property type="molecule type" value="Genomic_DNA"/>
</dbReference>
<dbReference type="RefSeq" id="WP_004086542.1">
    <property type="nucleotide sequence ID" value="NC_010513.1"/>
</dbReference>
<dbReference type="SMR" id="B0U5M0"/>
<dbReference type="KEGG" id="xfm:Xfasm12_0515"/>
<dbReference type="HOGENOM" id="CLU_103849_1_2_6"/>
<dbReference type="GO" id="GO:0005829">
    <property type="term" value="C:cytosol"/>
    <property type="evidence" value="ECO:0007669"/>
    <property type="project" value="TreeGrafter"/>
</dbReference>
<dbReference type="GO" id="GO:0015935">
    <property type="term" value="C:small ribosomal subunit"/>
    <property type="evidence" value="ECO:0007669"/>
    <property type="project" value="TreeGrafter"/>
</dbReference>
<dbReference type="GO" id="GO:0019843">
    <property type="term" value="F:rRNA binding"/>
    <property type="evidence" value="ECO:0007669"/>
    <property type="project" value="UniProtKB-UniRule"/>
</dbReference>
<dbReference type="GO" id="GO:0003735">
    <property type="term" value="F:structural constituent of ribosome"/>
    <property type="evidence" value="ECO:0007669"/>
    <property type="project" value="InterPro"/>
</dbReference>
<dbReference type="GO" id="GO:0000049">
    <property type="term" value="F:tRNA binding"/>
    <property type="evidence" value="ECO:0007669"/>
    <property type="project" value="UniProtKB-UniRule"/>
</dbReference>
<dbReference type="GO" id="GO:0006412">
    <property type="term" value="P:translation"/>
    <property type="evidence" value="ECO:0007669"/>
    <property type="project" value="UniProtKB-UniRule"/>
</dbReference>
<dbReference type="FunFam" id="1.10.8.50:FF:000001">
    <property type="entry name" value="30S ribosomal protein S13"/>
    <property type="match status" value="1"/>
</dbReference>
<dbReference type="FunFam" id="4.10.910.10:FF:000001">
    <property type="entry name" value="30S ribosomal protein S13"/>
    <property type="match status" value="1"/>
</dbReference>
<dbReference type="Gene3D" id="1.10.8.50">
    <property type="match status" value="1"/>
</dbReference>
<dbReference type="Gene3D" id="4.10.910.10">
    <property type="entry name" value="30s ribosomal protein s13, domain 2"/>
    <property type="match status" value="1"/>
</dbReference>
<dbReference type="HAMAP" id="MF_01315">
    <property type="entry name" value="Ribosomal_uS13"/>
    <property type="match status" value="1"/>
</dbReference>
<dbReference type="InterPro" id="IPR027437">
    <property type="entry name" value="Rbsml_uS13_C"/>
</dbReference>
<dbReference type="InterPro" id="IPR001892">
    <property type="entry name" value="Ribosomal_uS13"/>
</dbReference>
<dbReference type="InterPro" id="IPR010979">
    <property type="entry name" value="Ribosomal_uS13-like_H2TH"/>
</dbReference>
<dbReference type="InterPro" id="IPR019980">
    <property type="entry name" value="Ribosomal_uS13_bac-type"/>
</dbReference>
<dbReference type="InterPro" id="IPR018269">
    <property type="entry name" value="Ribosomal_uS13_CS"/>
</dbReference>
<dbReference type="NCBIfam" id="TIGR03631">
    <property type="entry name" value="uS13_bact"/>
    <property type="match status" value="1"/>
</dbReference>
<dbReference type="PANTHER" id="PTHR10871">
    <property type="entry name" value="30S RIBOSOMAL PROTEIN S13/40S RIBOSOMAL PROTEIN S18"/>
    <property type="match status" value="1"/>
</dbReference>
<dbReference type="PANTHER" id="PTHR10871:SF1">
    <property type="entry name" value="SMALL RIBOSOMAL SUBUNIT PROTEIN US13M"/>
    <property type="match status" value="1"/>
</dbReference>
<dbReference type="Pfam" id="PF00416">
    <property type="entry name" value="Ribosomal_S13"/>
    <property type="match status" value="1"/>
</dbReference>
<dbReference type="PIRSF" id="PIRSF002134">
    <property type="entry name" value="Ribosomal_S13"/>
    <property type="match status" value="1"/>
</dbReference>
<dbReference type="SUPFAM" id="SSF46946">
    <property type="entry name" value="S13-like H2TH domain"/>
    <property type="match status" value="1"/>
</dbReference>
<dbReference type="PROSITE" id="PS00646">
    <property type="entry name" value="RIBOSOMAL_S13_1"/>
    <property type="match status" value="1"/>
</dbReference>
<dbReference type="PROSITE" id="PS50159">
    <property type="entry name" value="RIBOSOMAL_S13_2"/>
    <property type="match status" value="1"/>
</dbReference>
<proteinExistence type="inferred from homology"/>
<name>RS13_XYLFM</name>
<organism>
    <name type="scientific">Xylella fastidiosa (strain M12)</name>
    <dbReference type="NCBI Taxonomy" id="405440"/>
    <lineage>
        <taxon>Bacteria</taxon>
        <taxon>Pseudomonadati</taxon>
        <taxon>Pseudomonadota</taxon>
        <taxon>Gammaproteobacteria</taxon>
        <taxon>Lysobacterales</taxon>
        <taxon>Lysobacteraceae</taxon>
        <taxon>Xylella</taxon>
    </lineage>
</organism>
<protein>
    <recommendedName>
        <fullName evidence="1">Small ribosomal subunit protein uS13</fullName>
    </recommendedName>
    <alternativeName>
        <fullName evidence="3">30S ribosomal protein S13</fullName>
    </alternativeName>
</protein>
<keyword id="KW-0687">Ribonucleoprotein</keyword>
<keyword id="KW-0689">Ribosomal protein</keyword>
<keyword id="KW-0694">RNA-binding</keyword>
<keyword id="KW-0699">rRNA-binding</keyword>
<keyword id="KW-0820">tRNA-binding</keyword>
<feature type="chain" id="PRO_1000141333" description="Small ribosomal subunit protein uS13">
    <location>
        <begin position="1"/>
        <end position="118"/>
    </location>
</feature>
<feature type="region of interest" description="Disordered" evidence="2">
    <location>
        <begin position="99"/>
        <end position="118"/>
    </location>
</feature>
<evidence type="ECO:0000255" key="1">
    <source>
        <dbReference type="HAMAP-Rule" id="MF_01315"/>
    </source>
</evidence>
<evidence type="ECO:0000256" key="2">
    <source>
        <dbReference type="SAM" id="MobiDB-lite"/>
    </source>
</evidence>
<evidence type="ECO:0000305" key="3"/>
<comment type="function">
    <text evidence="1">Located at the top of the head of the 30S subunit, it contacts several helices of the 16S rRNA. In the 70S ribosome it contacts the 23S rRNA (bridge B1a) and protein L5 of the 50S subunit (bridge B1b), connecting the 2 subunits; these bridges are implicated in subunit movement. Contacts the tRNAs in the A and P-sites.</text>
</comment>
<comment type="subunit">
    <text evidence="1">Part of the 30S ribosomal subunit. Forms a loose heterodimer with protein S19. Forms two bridges to the 50S subunit in the 70S ribosome.</text>
</comment>
<comment type="similarity">
    <text evidence="1">Belongs to the universal ribosomal protein uS13 family.</text>
</comment>
<reference key="1">
    <citation type="journal article" date="2010" name="J. Bacteriol.">
        <title>Whole genome sequences of two Xylella fastidiosa strains (M12 and M23) causing almond leaf scorch disease in California.</title>
        <authorList>
            <person name="Chen J."/>
            <person name="Xie G."/>
            <person name="Han S."/>
            <person name="Chertkov O."/>
            <person name="Sims D."/>
            <person name="Civerolo E.L."/>
        </authorList>
    </citation>
    <scope>NUCLEOTIDE SEQUENCE [LARGE SCALE GENOMIC DNA]</scope>
    <source>
        <strain>M12</strain>
    </source>
</reference>
<sequence length="118" mass="13625">MARIAGVNLAIQKHVWIGLQSIYGIGRTRSRKVCDAANVAIYTKIRDLSEPEIERLRVEVGKYVIEGDLRREVGMAIKRLMDLNCYRGLRHRRCLPLRGQRTRTNARTRKGPRKAIKK</sequence>
<gene>
    <name evidence="1" type="primary">rpsM</name>
    <name type="ordered locus">Xfasm12_0515</name>
</gene>
<accession>B0U5M0</accession>